<organism>
    <name type="scientific">Mus musculus</name>
    <name type="common">Mouse</name>
    <dbReference type="NCBI Taxonomy" id="10090"/>
    <lineage>
        <taxon>Eukaryota</taxon>
        <taxon>Metazoa</taxon>
        <taxon>Chordata</taxon>
        <taxon>Craniata</taxon>
        <taxon>Vertebrata</taxon>
        <taxon>Euteleostomi</taxon>
        <taxon>Mammalia</taxon>
        <taxon>Eutheria</taxon>
        <taxon>Euarchontoglires</taxon>
        <taxon>Glires</taxon>
        <taxon>Rodentia</taxon>
        <taxon>Myomorpha</taxon>
        <taxon>Muroidea</taxon>
        <taxon>Muridae</taxon>
        <taxon>Murinae</taxon>
        <taxon>Mus</taxon>
        <taxon>Mus</taxon>
    </lineage>
</organism>
<gene>
    <name type="primary">Ip6k3</name>
    <name type="synonym">Ihpk3</name>
</gene>
<comment type="function">
    <text evidence="1">Converts inositol hexakisphosphate (InsP6) to diphosphoinositol pentakisphosphate (InsP7/PP-InsP5). Converts 1,3,4,5,6-pentakisphosphate (InsP5) to PP-InsP4 (By similarity).</text>
</comment>
<comment type="catalytic activity">
    <reaction>
        <text>1D-myo-inositol hexakisphosphate + ATP = 5-diphospho-1D-myo-inositol 1,2,3,4,6-pentakisphosphate + ADP</text>
        <dbReference type="Rhea" id="RHEA:12793"/>
        <dbReference type="ChEBI" id="CHEBI:30616"/>
        <dbReference type="ChEBI" id="CHEBI:58130"/>
        <dbReference type="ChEBI" id="CHEBI:58628"/>
        <dbReference type="ChEBI" id="CHEBI:456216"/>
        <dbReference type="EC" id="2.7.4.21"/>
    </reaction>
</comment>
<comment type="catalytic activity">
    <reaction>
        <text>1-diphospho-1D-myo-inositol 2,3,4,5,6-pentakisphosphate + ATP + H(+) = 1,5-bis(diphospho)-1D-myo-inositol 2,3,4,6-tetrakisphosphate + ADP</text>
        <dbReference type="Rhea" id="RHEA:37467"/>
        <dbReference type="ChEBI" id="CHEBI:15378"/>
        <dbReference type="ChEBI" id="CHEBI:30616"/>
        <dbReference type="ChEBI" id="CHEBI:74946"/>
        <dbReference type="ChEBI" id="CHEBI:77983"/>
        <dbReference type="ChEBI" id="CHEBI:456216"/>
        <dbReference type="EC" id="2.7.4.21"/>
    </reaction>
</comment>
<comment type="subcellular location">
    <subcellularLocation>
        <location evidence="1">Cytoplasm</location>
    </subcellularLocation>
</comment>
<comment type="tissue specificity">
    <text evidence="2">Highly expressed in cerebellum, brain cortex, kidney, thymus and lung. Detected at lower levels in hippocampus, testis, heart and olfactory bulb.</text>
</comment>
<comment type="similarity">
    <text evidence="3">Belongs to the inositol phosphokinase (IPK) family.</text>
</comment>
<accession>Q8BWD2</accession>
<protein>
    <recommendedName>
        <fullName>Inositol hexakisphosphate kinase 3</fullName>
        <shortName>InsP6 kinase 3</shortName>
        <ecNumber>2.7.4.21</ecNumber>
    </recommendedName>
    <alternativeName>
        <fullName>Inositol hexaphosphate kinase 3</fullName>
    </alternativeName>
</protein>
<feature type="chain" id="PRO_0000066882" description="Inositol hexakisphosphate kinase 3">
    <location>
        <begin position="1"/>
        <end position="396"/>
    </location>
</feature>
<feature type="binding site" evidence="1">
    <location>
        <begin position="206"/>
        <end position="214"/>
    </location>
    <ligand>
        <name>substrate</name>
    </ligand>
</feature>
<evidence type="ECO:0000250" key="1"/>
<evidence type="ECO:0000269" key="2">
    <source>
    </source>
</evidence>
<evidence type="ECO:0000305" key="3"/>
<sequence>MVVRHSSDKGKIGVGVPLEPFLHQVGGHLSVLQYDAYTVCKPLVSQEQKFYESLPLAMKCFTPKYKGTITVRLRRDSRGHLGLVANPLKENLEPFQVSPESRAVALWQTLQQTTGSESSPCPLTQLARSLKESAAKVLLRSDCHLSTQASPLVESEDGSQVERKGFNPWGLHCHQAHLTRLCSQYPEDKRHRFLLLENVVSQYKQPCILDLKMGTRQHGDDASEEKKARHMKKCAQSTSACLGVRICGMQVYQTDQKSFLCKDKYYGRKLSVEGFRQALSQFLHDGTRLRAELLEPILRRLQALLTVIRSQSSYRFYSSSVLIIYDGEPPQTTQGSTSGGVTSGDPAKVDVRMIDFAHTTFKGSWNEHTTYEGPDPGYIFGLENLIGILRDIQEGE</sequence>
<keyword id="KW-0067">ATP-binding</keyword>
<keyword id="KW-0963">Cytoplasm</keyword>
<keyword id="KW-0418">Kinase</keyword>
<keyword id="KW-0547">Nucleotide-binding</keyword>
<keyword id="KW-1185">Reference proteome</keyword>
<keyword id="KW-0808">Transferase</keyword>
<proteinExistence type="evidence at transcript level"/>
<reference key="1">
    <citation type="journal article" date="2005" name="Science">
        <title>The transcriptional landscape of the mammalian genome.</title>
        <authorList>
            <person name="Carninci P."/>
            <person name="Kasukawa T."/>
            <person name="Katayama S."/>
            <person name="Gough J."/>
            <person name="Frith M.C."/>
            <person name="Maeda N."/>
            <person name="Oyama R."/>
            <person name="Ravasi T."/>
            <person name="Lenhard B."/>
            <person name="Wells C."/>
            <person name="Kodzius R."/>
            <person name="Shimokawa K."/>
            <person name="Bajic V.B."/>
            <person name="Brenner S.E."/>
            <person name="Batalov S."/>
            <person name="Forrest A.R."/>
            <person name="Zavolan M."/>
            <person name="Davis M.J."/>
            <person name="Wilming L.G."/>
            <person name="Aidinis V."/>
            <person name="Allen J.E."/>
            <person name="Ambesi-Impiombato A."/>
            <person name="Apweiler R."/>
            <person name="Aturaliya R.N."/>
            <person name="Bailey T.L."/>
            <person name="Bansal M."/>
            <person name="Baxter L."/>
            <person name="Beisel K.W."/>
            <person name="Bersano T."/>
            <person name="Bono H."/>
            <person name="Chalk A.M."/>
            <person name="Chiu K.P."/>
            <person name="Choudhary V."/>
            <person name="Christoffels A."/>
            <person name="Clutterbuck D.R."/>
            <person name="Crowe M.L."/>
            <person name="Dalla E."/>
            <person name="Dalrymple B.P."/>
            <person name="de Bono B."/>
            <person name="Della Gatta G."/>
            <person name="di Bernardo D."/>
            <person name="Down T."/>
            <person name="Engstrom P."/>
            <person name="Fagiolini M."/>
            <person name="Faulkner G."/>
            <person name="Fletcher C.F."/>
            <person name="Fukushima T."/>
            <person name="Furuno M."/>
            <person name="Futaki S."/>
            <person name="Gariboldi M."/>
            <person name="Georgii-Hemming P."/>
            <person name="Gingeras T.R."/>
            <person name="Gojobori T."/>
            <person name="Green R.E."/>
            <person name="Gustincich S."/>
            <person name="Harbers M."/>
            <person name="Hayashi Y."/>
            <person name="Hensch T.K."/>
            <person name="Hirokawa N."/>
            <person name="Hill D."/>
            <person name="Huminiecki L."/>
            <person name="Iacono M."/>
            <person name="Ikeo K."/>
            <person name="Iwama A."/>
            <person name="Ishikawa T."/>
            <person name="Jakt M."/>
            <person name="Kanapin A."/>
            <person name="Katoh M."/>
            <person name="Kawasawa Y."/>
            <person name="Kelso J."/>
            <person name="Kitamura H."/>
            <person name="Kitano H."/>
            <person name="Kollias G."/>
            <person name="Krishnan S.P."/>
            <person name="Kruger A."/>
            <person name="Kummerfeld S.K."/>
            <person name="Kurochkin I.V."/>
            <person name="Lareau L.F."/>
            <person name="Lazarevic D."/>
            <person name="Lipovich L."/>
            <person name="Liu J."/>
            <person name="Liuni S."/>
            <person name="McWilliam S."/>
            <person name="Madan Babu M."/>
            <person name="Madera M."/>
            <person name="Marchionni L."/>
            <person name="Matsuda H."/>
            <person name="Matsuzawa S."/>
            <person name="Miki H."/>
            <person name="Mignone F."/>
            <person name="Miyake S."/>
            <person name="Morris K."/>
            <person name="Mottagui-Tabar S."/>
            <person name="Mulder N."/>
            <person name="Nakano N."/>
            <person name="Nakauchi H."/>
            <person name="Ng P."/>
            <person name="Nilsson R."/>
            <person name="Nishiguchi S."/>
            <person name="Nishikawa S."/>
            <person name="Nori F."/>
            <person name="Ohara O."/>
            <person name="Okazaki Y."/>
            <person name="Orlando V."/>
            <person name="Pang K.C."/>
            <person name="Pavan W.J."/>
            <person name="Pavesi G."/>
            <person name="Pesole G."/>
            <person name="Petrovsky N."/>
            <person name="Piazza S."/>
            <person name="Reed J."/>
            <person name="Reid J.F."/>
            <person name="Ring B.Z."/>
            <person name="Ringwald M."/>
            <person name="Rost B."/>
            <person name="Ruan Y."/>
            <person name="Salzberg S.L."/>
            <person name="Sandelin A."/>
            <person name="Schneider C."/>
            <person name="Schoenbach C."/>
            <person name="Sekiguchi K."/>
            <person name="Semple C.A."/>
            <person name="Seno S."/>
            <person name="Sessa L."/>
            <person name="Sheng Y."/>
            <person name="Shibata Y."/>
            <person name="Shimada H."/>
            <person name="Shimada K."/>
            <person name="Silva D."/>
            <person name="Sinclair B."/>
            <person name="Sperling S."/>
            <person name="Stupka E."/>
            <person name="Sugiura K."/>
            <person name="Sultana R."/>
            <person name="Takenaka Y."/>
            <person name="Taki K."/>
            <person name="Tammoja K."/>
            <person name="Tan S.L."/>
            <person name="Tang S."/>
            <person name="Taylor M.S."/>
            <person name="Tegner J."/>
            <person name="Teichmann S.A."/>
            <person name="Ueda H.R."/>
            <person name="van Nimwegen E."/>
            <person name="Verardo R."/>
            <person name="Wei C.L."/>
            <person name="Yagi K."/>
            <person name="Yamanishi H."/>
            <person name="Zabarovsky E."/>
            <person name="Zhu S."/>
            <person name="Zimmer A."/>
            <person name="Hide W."/>
            <person name="Bult C."/>
            <person name="Grimmond S.M."/>
            <person name="Teasdale R.D."/>
            <person name="Liu E.T."/>
            <person name="Brusic V."/>
            <person name="Quackenbush J."/>
            <person name="Wahlestedt C."/>
            <person name="Mattick J.S."/>
            <person name="Hume D.A."/>
            <person name="Kai C."/>
            <person name="Sasaki D."/>
            <person name="Tomaru Y."/>
            <person name="Fukuda S."/>
            <person name="Kanamori-Katayama M."/>
            <person name="Suzuki M."/>
            <person name="Aoki J."/>
            <person name="Arakawa T."/>
            <person name="Iida J."/>
            <person name="Imamura K."/>
            <person name="Itoh M."/>
            <person name="Kato T."/>
            <person name="Kawaji H."/>
            <person name="Kawagashira N."/>
            <person name="Kawashima T."/>
            <person name="Kojima M."/>
            <person name="Kondo S."/>
            <person name="Konno H."/>
            <person name="Nakano K."/>
            <person name="Ninomiya N."/>
            <person name="Nishio T."/>
            <person name="Okada M."/>
            <person name="Plessy C."/>
            <person name="Shibata K."/>
            <person name="Shiraki T."/>
            <person name="Suzuki S."/>
            <person name="Tagami M."/>
            <person name="Waki K."/>
            <person name="Watahiki A."/>
            <person name="Okamura-Oho Y."/>
            <person name="Suzuki H."/>
            <person name="Kawai J."/>
            <person name="Hayashizaki Y."/>
        </authorList>
    </citation>
    <scope>NUCLEOTIDE SEQUENCE [LARGE SCALE MRNA]</scope>
    <source>
        <strain>C57BL/6J</strain>
        <tissue>Heart</tissue>
    </source>
</reference>
<reference key="2">
    <citation type="journal article" date="2001" name="J. Biol. Chem.">
        <title>Identification and characterization of a novel inositol hexakisphosphate kinase.</title>
        <authorList>
            <person name="Saiardi A."/>
            <person name="Nagata E."/>
            <person name="Luo H.R."/>
            <person name="Snowman A.M."/>
            <person name="Snyder S.H."/>
        </authorList>
    </citation>
    <scope>TISSUE SPECIFICITY</scope>
</reference>
<name>IP6K3_MOUSE</name>
<dbReference type="EC" id="2.7.4.21"/>
<dbReference type="EMBL" id="AK052857">
    <property type="protein sequence ID" value="BAC35176.1"/>
    <property type="molecule type" value="mRNA"/>
</dbReference>
<dbReference type="CCDS" id="CCDS28562.1"/>
<dbReference type="RefSeq" id="NP_766615.1">
    <property type="nucleotide sequence ID" value="NM_173027.2"/>
</dbReference>
<dbReference type="SMR" id="Q8BWD2"/>
<dbReference type="FunCoup" id="Q8BWD2">
    <property type="interactions" value="1191"/>
</dbReference>
<dbReference type="STRING" id="10090.ENSMUSP00000025046"/>
<dbReference type="PhosphoSitePlus" id="Q8BWD2"/>
<dbReference type="PaxDb" id="10090-ENSMUSP00000025046"/>
<dbReference type="Antibodypedia" id="45687">
    <property type="antibodies" value="145 antibodies from 28 providers"/>
</dbReference>
<dbReference type="DNASU" id="271424"/>
<dbReference type="Ensembl" id="ENSMUST00000025046.4">
    <property type="protein sequence ID" value="ENSMUSP00000025046.3"/>
    <property type="gene ID" value="ENSMUSG00000024210.4"/>
</dbReference>
<dbReference type="GeneID" id="271424"/>
<dbReference type="KEGG" id="mmu:271424"/>
<dbReference type="UCSC" id="uc008bfl.1">
    <property type="organism name" value="mouse"/>
</dbReference>
<dbReference type="AGR" id="MGI:3045325"/>
<dbReference type="CTD" id="117283"/>
<dbReference type="MGI" id="MGI:3045325">
    <property type="gene designation" value="Ip6k3"/>
</dbReference>
<dbReference type="VEuPathDB" id="HostDB:ENSMUSG00000024210"/>
<dbReference type="eggNOG" id="KOG1620">
    <property type="taxonomic scope" value="Eukaryota"/>
</dbReference>
<dbReference type="GeneTree" id="ENSGT00940000160887"/>
<dbReference type="HOGENOM" id="CLU_014862_0_0_1"/>
<dbReference type="InParanoid" id="Q8BWD2"/>
<dbReference type="OMA" id="VYQADTG"/>
<dbReference type="OrthoDB" id="2573163at2759"/>
<dbReference type="PhylomeDB" id="Q8BWD2"/>
<dbReference type="TreeFam" id="TF314066"/>
<dbReference type="BRENDA" id="2.7.4.21">
    <property type="organism ID" value="3474"/>
</dbReference>
<dbReference type="Reactome" id="R-MMU-1855167">
    <property type="pathway name" value="Synthesis of pyrophosphates in the cytosol"/>
</dbReference>
<dbReference type="BioGRID-ORCS" id="271424">
    <property type="hits" value="2 hits in 78 CRISPR screens"/>
</dbReference>
<dbReference type="PRO" id="PR:Q8BWD2"/>
<dbReference type="Proteomes" id="UP000000589">
    <property type="component" value="Chromosome 17"/>
</dbReference>
<dbReference type="RNAct" id="Q8BWD2">
    <property type="molecule type" value="protein"/>
</dbReference>
<dbReference type="Bgee" id="ENSMUSG00000024210">
    <property type="expression patterns" value="Expressed in hindlimb stylopod muscle and 34 other cell types or tissues"/>
</dbReference>
<dbReference type="GO" id="GO:0005737">
    <property type="term" value="C:cytoplasm"/>
    <property type="evidence" value="ECO:0007669"/>
    <property type="project" value="UniProtKB-SubCell"/>
</dbReference>
<dbReference type="GO" id="GO:0005634">
    <property type="term" value="C:nucleus"/>
    <property type="evidence" value="ECO:0000314"/>
    <property type="project" value="UniProtKB"/>
</dbReference>
<dbReference type="GO" id="GO:0005524">
    <property type="term" value="F:ATP binding"/>
    <property type="evidence" value="ECO:0007669"/>
    <property type="project" value="UniProtKB-KW"/>
</dbReference>
<dbReference type="GO" id="GO:0000832">
    <property type="term" value="F:inositol hexakisphosphate 5-kinase activity"/>
    <property type="evidence" value="ECO:0007669"/>
    <property type="project" value="RHEA"/>
</dbReference>
<dbReference type="GO" id="GO:0000831">
    <property type="term" value="F:inositol hexakisphosphate 6-kinase activity"/>
    <property type="evidence" value="ECO:0000266"/>
    <property type="project" value="MGI"/>
</dbReference>
<dbReference type="GO" id="GO:0032958">
    <property type="term" value="P:inositol phosphate biosynthetic process"/>
    <property type="evidence" value="ECO:0000266"/>
    <property type="project" value="MGI"/>
</dbReference>
<dbReference type="GO" id="GO:0040011">
    <property type="term" value="P:locomotion"/>
    <property type="evidence" value="ECO:0000315"/>
    <property type="project" value="MGI"/>
</dbReference>
<dbReference type="GO" id="GO:0046488">
    <property type="term" value="P:phosphatidylinositol metabolic process"/>
    <property type="evidence" value="ECO:0007669"/>
    <property type="project" value="Ensembl"/>
</dbReference>
<dbReference type="FunFam" id="3.30.470.160:FF:000002">
    <property type="entry name" value="Kinase"/>
    <property type="match status" value="1"/>
</dbReference>
<dbReference type="Gene3D" id="3.30.470.160">
    <property type="entry name" value="Inositol polyphosphate kinase"/>
    <property type="match status" value="1"/>
</dbReference>
<dbReference type="InterPro" id="IPR005522">
    <property type="entry name" value="IPK"/>
</dbReference>
<dbReference type="InterPro" id="IPR038286">
    <property type="entry name" value="IPK_sf"/>
</dbReference>
<dbReference type="PANTHER" id="PTHR12400:SF40">
    <property type="entry name" value="INOSITOL HEXAKISPHOSPHATE KINASE 3"/>
    <property type="match status" value="1"/>
</dbReference>
<dbReference type="PANTHER" id="PTHR12400">
    <property type="entry name" value="INOSITOL POLYPHOSPHATE KINASE"/>
    <property type="match status" value="1"/>
</dbReference>
<dbReference type="Pfam" id="PF03770">
    <property type="entry name" value="IPK"/>
    <property type="match status" value="1"/>
</dbReference>
<dbReference type="SUPFAM" id="SSF56104">
    <property type="entry name" value="SAICAR synthase-like"/>
    <property type="match status" value="1"/>
</dbReference>